<comment type="function">
    <text evidence="1">Transcription regulator. Forms a sequence-specific DNA-binding protein complex with MYC or MAD which recognizes the core sequence 5'-CAC[GA]TG-3'. The MYC-MAX complex is a transcriptional activator, whereas the MAD-MAX complex is a repressor (By similarity).</text>
</comment>
<comment type="subunit">
    <text evidence="1">Efficient DNA binding requires dimerization with another bHLH protein. Binds DNA as a heterodimer with MYC or MAD. Component of some MLL1/MLL complex (By similarity).</text>
</comment>
<comment type="subcellular location">
    <subcellularLocation>
        <location>Nucleus</location>
    </subcellularLocation>
</comment>
<comment type="alternative products">
    <event type="alternative splicing"/>
    <isoform>
        <id>P52161-1</id>
        <name>Long</name>
        <sequence type="displayed"/>
    </isoform>
    <isoform>
        <id>P52161-2</id>
        <name>Short</name>
        <sequence type="described" ref="VSP_002121"/>
    </isoform>
</comment>
<comment type="tissue specificity">
    <text evidence="4">High levels are seen in the kidney, gills and uterus. It is also found in the brain and heart.</text>
</comment>
<comment type="developmental stage">
    <text evidence="4">Expressed at relatively constant levels up to the end of the embryonic stage (72 hours), with a moderate decrease between the 12 and 24 hours stages marked by the formation of somites and organ rudiments.</text>
</comment>
<comment type="PTM">
    <text evidence="6">Phosphorylated.</text>
</comment>
<comment type="similarity">
    <text evidence="6">Belongs to the MAX family.</text>
</comment>
<feature type="chain" id="PRO_0000127273" description="Protein max">
    <location>
        <begin position="1"/>
        <end position="165"/>
    </location>
</feature>
<feature type="domain" description="bHLH" evidence="2">
    <location>
        <begin position="23"/>
        <end position="79"/>
    </location>
</feature>
<feature type="region of interest" description="Disordered" evidence="3">
    <location>
        <begin position="1"/>
        <end position="38"/>
    </location>
</feature>
<feature type="region of interest" description="Disordered" evidence="3">
    <location>
        <begin position="47"/>
        <end position="66"/>
    </location>
</feature>
<feature type="region of interest" description="Leucine-zipper">
    <location>
        <begin position="86"/>
        <end position="107"/>
    </location>
</feature>
<feature type="region of interest" description="Disordered" evidence="3">
    <location>
        <begin position="119"/>
        <end position="165"/>
    </location>
</feature>
<feature type="compositionally biased region" description="Acidic residues" evidence="3">
    <location>
        <begin position="1"/>
        <end position="13"/>
    </location>
</feature>
<feature type="compositionally biased region" description="Basic and acidic residues" evidence="3">
    <location>
        <begin position="14"/>
        <end position="38"/>
    </location>
</feature>
<feature type="compositionally biased region" description="Polar residues" evidence="3">
    <location>
        <begin position="56"/>
        <end position="65"/>
    </location>
</feature>
<feature type="compositionally biased region" description="Polar residues" evidence="3">
    <location>
        <begin position="119"/>
        <end position="132"/>
    </location>
</feature>
<feature type="compositionally biased region" description="Low complexity" evidence="3">
    <location>
        <begin position="140"/>
        <end position="149"/>
    </location>
</feature>
<feature type="compositionally biased region" description="Basic residues" evidence="3">
    <location>
        <begin position="156"/>
        <end position="165"/>
    </location>
</feature>
<feature type="splice variant" id="VSP_002121" description="In isoform Short." evidence="5">
    <location>
        <begin position="13"/>
        <end position="21"/>
    </location>
</feature>
<name>MAX_DANRE</name>
<evidence type="ECO:0000250" key="1"/>
<evidence type="ECO:0000255" key="2">
    <source>
        <dbReference type="PROSITE-ProRule" id="PRU00981"/>
    </source>
</evidence>
<evidence type="ECO:0000256" key="3">
    <source>
        <dbReference type="SAM" id="MobiDB-lite"/>
    </source>
</evidence>
<evidence type="ECO:0000269" key="4">
    <source>
    </source>
</evidence>
<evidence type="ECO:0000303" key="5">
    <source>
    </source>
</evidence>
<evidence type="ECO:0000305" key="6"/>
<keyword id="KW-0010">Activator</keyword>
<keyword id="KW-0025">Alternative splicing</keyword>
<keyword id="KW-0238">DNA-binding</keyword>
<keyword id="KW-0539">Nucleus</keyword>
<keyword id="KW-0597">Phosphoprotein</keyword>
<keyword id="KW-1185">Reference proteome</keyword>
<keyword id="KW-0678">Repressor</keyword>
<keyword id="KW-0804">Transcription</keyword>
<keyword id="KW-0805">Transcription regulation</keyword>
<reference key="1">
    <citation type="journal article" date="1993" name="Mol. Cell. Biol.">
        <title>Zebra fish myc family and max genes: differential expression and oncogenic activity throughout vertebrate evolution.</title>
        <authorList>
            <person name="Schreiber-Agus N."/>
            <person name="Horner J."/>
            <person name="Torres R."/>
            <person name="Chiu F.-C."/>
            <person name="DePinho R.A."/>
        </authorList>
    </citation>
    <scope>NUCLEOTIDE SEQUENCE [MRNA] (ISOFORMS LONG AND SHORT)</scope>
    <scope>TISSUE SPECIFICITY</scope>
    <scope>DEVELOPMENTAL STAGE</scope>
    <source>
        <tissue>Embryo</tissue>
    </source>
</reference>
<dbReference type="EMBL" id="L11711">
    <property type="protein sequence ID" value="AAA02483.1"/>
    <property type="molecule type" value="mRNA"/>
</dbReference>
<dbReference type="PIR" id="B48059">
    <property type="entry name" value="B48059"/>
</dbReference>
<dbReference type="PIR" id="C48059">
    <property type="entry name" value="C48059"/>
</dbReference>
<dbReference type="SMR" id="P52161"/>
<dbReference type="FunCoup" id="P52161">
    <property type="interactions" value="1572"/>
</dbReference>
<dbReference type="STRING" id="7955.ENSDARP00000111552"/>
<dbReference type="PaxDb" id="7955-ENSDARP00000044461"/>
<dbReference type="AGR" id="ZFIN:ZDB-GENE-990415-152"/>
<dbReference type="ZFIN" id="ZDB-GENE-990415-152">
    <property type="gene designation" value="max"/>
</dbReference>
<dbReference type="eggNOG" id="KOG2483">
    <property type="taxonomic scope" value="Eukaryota"/>
</dbReference>
<dbReference type="InParanoid" id="P52161"/>
<dbReference type="PhylomeDB" id="P52161"/>
<dbReference type="PRO" id="PR:P52161"/>
<dbReference type="Proteomes" id="UP000000437">
    <property type="component" value="Unplaced"/>
</dbReference>
<dbReference type="GO" id="GO:0071339">
    <property type="term" value="C:MLL1 complex"/>
    <property type="evidence" value="ECO:0000250"/>
    <property type="project" value="UniProtKB"/>
</dbReference>
<dbReference type="GO" id="GO:0090575">
    <property type="term" value="C:RNA polymerase II transcription regulator complex"/>
    <property type="evidence" value="ECO:0000318"/>
    <property type="project" value="GO_Central"/>
</dbReference>
<dbReference type="GO" id="GO:0071141">
    <property type="term" value="C:SMAD protein complex"/>
    <property type="evidence" value="ECO:0000353"/>
    <property type="project" value="ZFIN"/>
</dbReference>
<dbReference type="GO" id="GO:0003677">
    <property type="term" value="F:DNA binding"/>
    <property type="evidence" value="ECO:0007669"/>
    <property type="project" value="UniProtKB-KW"/>
</dbReference>
<dbReference type="GO" id="GO:0003700">
    <property type="term" value="F:DNA-binding transcription factor activity"/>
    <property type="evidence" value="ECO:0000318"/>
    <property type="project" value="GO_Central"/>
</dbReference>
<dbReference type="GO" id="GO:0046983">
    <property type="term" value="F:protein dimerization activity"/>
    <property type="evidence" value="ECO:0007669"/>
    <property type="project" value="InterPro"/>
</dbReference>
<dbReference type="GO" id="GO:0048264">
    <property type="term" value="P:determination of ventral identity"/>
    <property type="evidence" value="ECO:0000315"/>
    <property type="project" value="ZFIN"/>
</dbReference>
<dbReference type="GO" id="GO:0009953">
    <property type="term" value="P:dorsal/ventral pattern formation"/>
    <property type="evidence" value="ECO:0000314"/>
    <property type="project" value="ZFIN"/>
</dbReference>
<dbReference type="GO" id="GO:0030097">
    <property type="term" value="P:hemopoiesis"/>
    <property type="evidence" value="ECO:0000315"/>
    <property type="project" value="ZFIN"/>
</dbReference>
<dbReference type="GO" id="GO:0045944">
    <property type="term" value="P:positive regulation of transcription by RNA polymerase II"/>
    <property type="evidence" value="ECO:0000318"/>
    <property type="project" value="GO_Central"/>
</dbReference>
<dbReference type="CDD" id="cd11406">
    <property type="entry name" value="bHLHzip_Max"/>
    <property type="match status" value="1"/>
</dbReference>
<dbReference type="FunFam" id="4.10.280.10:FF:000023">
    <property type="entry name" value="MAX isoform 13"/>
    <property type="match status" value="1"/>
</dbReference>
<dbReference type="Gene3D" id="4.10.280.10">
    <property type="entry name" value="Helix-loop-helix DNA-binding domain"/>
    <property type="match status" value="1"/>
</dbReference>
<dbReference type="InterPro" id="IPR011598">
    <property type="entry name" value="bHLH_dom"/>
</dbReference>
<dbReference type="InterPro" id="IPR036638">
    <property type="entry name" value="HLH_DNA-bd_sf"/>
</dbReference>
<dbReference type="PANTHER" id="PTHR10328:SF3">
    <property type="entry name" value="PROTEIN MAX"/>
    <property type="match status" value="1"/>
</dbReference>
<dbReference type="PANTHER" id="PTHR10328">
    <property type="entry name" value="PROTEIN MAX MYC-ASSOCIATED FACTOR X"/>
    <property type="match status" value="1"/>
</dbReference>
<dbReference type="Pfam" id="PF00010">
    <property type="entry name" value="HLH"/>
    <property type="match status" value="1"/>
</dbReference>
<dbReference type="SMART" id="SM00353">
    <property type="entry name" value="HLH"/>
    <property type="match status" value="1"/>
</dbReference>
<dbReference type="SUPFAM" id="SSF47459">
    <property type="entry name" value="HLH, helix-loop-helix DNA-binding domain"/>
    <property type="match status" value="1"/>
</dbReference>
<dbReference type="PROSITE" id="PS50888">
    <property type="entry name" value="BHLH"/>
    <property type="match status" value="1"/>
</dbReference>
<gene>
    <name type="primary">max</name>
</gene>
<sequence length="165" mass="18728">MSDNDDIEVDSDADSPRFHGVADKRAHHNALERKRRDHIKDSFHSLRDSVPALQGEKQSIKQASRAQILDKATEYIQYMRRKNHTHQQDIDDLKRQNALLEQQVRALEKVKGTTQLQANYSSSDSSLYTNPKGQAVSAFDGGSDSSSGSEPEEQRTRKKHRPEDS</sequence>
<organism>
    <name type="scientific">Danio rerio</name>
    <name type="common">Zebrafish</name>
    <name type="synonym">Brachydanio rerio</name>
    <dbReference type="NCBI Taxonomy" id="7955"/>
    <lineage>
        <taxon>Eukaryota</taxon>
        <taxon>Metazoa</taxon>
        <taxon>Chordata</taxon>
        <taxon>Craniata</taxon>
        <taxon>Vertebrata</taxon>
        <taxon>Euteleostomi</taxon>
        <taxon>Actinopterygii</taxon>
        <taxon>Neopterygii</taxon>
        <taxon>Teleostei</taxon>
        <taxon>Ostariophysi</taxon>
        <taxon>Cypriniformes</taxon>
        <taxon>Danionidae</taxon>
        <taxon>Danioninae</taxon>
        <taxon>Danio</taxon>
    </lineage>
</organism>
<protein>
    <recommendedName>
        <fullName>Protein max</fullName>
    </recommendedName>
    <alternativeName>
        <fullName>Myc-associated factor X</fullName>
    </alternativeName>
</protein>
<proteinExistence type="evidence at transcript level"/>
<accession>P52161</accession>